<protein>
    <recommendedName>
        <fullName evidence="1">Maintenance of mitochondrial morphology protein 1</fullName>
    </recommendedName>
</protein>
<feature type="chain" id="PRO_0000384259" description="Maintenance of mitochondrial morphology protein 1">
    <location>
        <begin position="1"/>
        <end position="444"/>
    </location>
</feature>
<feature type="topological domain" description="Lumenal" evidence="1">
    <location>
        <begin position="1"/>
        <end position="110"/>
    </location>
</feature>
<feature type="transmembrane region" description="Helical" evidence="1">
    <location>
        <begin position="111"/>
        <end position="131"/>
    </location>
</feature>
<feature type="topological domain" description="Cytoplasmic" evidence="1">
    <location>
        <begin position="132"/>
        <end position="444"/>
    </location>
</feature>
<feature type="domain" description="SMP-LTD" evidence="1">
    <location>
        <begin position="207"/>
        <end position="419"/>
    </location>
</feature>
<dbReference type="EMBL" id="DS480383">
    <property type="protein sequence ID" value="EDO19033.1"/>
    <property type="molecule type" value="Genomic_DNA"/>
</dbReference>
<dbReference type="RefSeq" id="XP_001646891.1">
    <property type="nucleotide sequence ID" value="XM_001646841.1"/>
</dbReference>
<dbReference type="SMR" id="A7TFL9"/>
<dbReference type="FunCoup" id="A7TFL9">
    <property type="interactions" value="98"/>
</dbReference>
<dbReference type="STRING" id="436907.A7TFL9"/>
<dbReference type="GeneID" id="5547360"/>
<dbReference type="KEGG" id="vpo:Kpol_2002p105"/>
<dbReference type="eggNOG" id="ENOG502QUUW">
    <property type="taxonomic scope" value="Eukaryota"/>
</dbReference>
<dbReference type="HOGENOM" id="CLU_032730_2_0_1"/>
<dbReference type="InParanoid" id="A7TFL9"/>
<dbReference type="OMA" id="WSFTQGL"/>
<dbReference type="OrthoDB" id="5599157at2759"/>
<dbReference type="PhylomeDB" id="A7TFL9"/>
<dbReference type="Proteomes" id="UP000000267">
    <property type="component" value="Unassembled WGS sequence"/>
</dbReference>
<dbReference type="GO" id="GO:0005789">
    <property type="term" value="C:endoplasmic reticulum membrane"/>
    <property type="evidence" value="ECO:0007669"/>
    <property type="project" value="UniProtKB-SubCell"/>
</dbReference>
<dbReference type="GO" id="GO:0032865">
    <property type="term" value="C:ERMES complex"/>
    <property type="evidence" value="ECO:0007669"/>
    <property type="project" value="UniProtKB-UniRule"/>
</dbReference>
<dbReference type="GO" id="GO:0008289">
    <property type="term" value="F:lipid binding"/>
    <property type="evidence" value="ECO:0007669"/>
    <property type="project" value="UniProtKB-KW"/>
</dbReference>
<dbReference type="GO" id="GO:0120013">
    <property type="term" value="F:lipid transfer activity"/>
    <property type="evidence" value="ECO:0007669"/>
    <property type="project" value="EnsemblFungi"/>
</dbReference>
<dbReference type="GO" id="GO:0015917">
    <property type="term" value="P:aminophospholipid transport"/>
    <property type="evidence" value="ECO:0007669"/>
    <property type="project" value="EnsemblFungi"/>
</dbReference>
<dbReference type="GO" id="GO:0000002">
    <property type="term" value="P:mitochondrial genome maintenance"/>
    <property type="evidence" value="ECO:0007669"/>
    <property type="project" value="UniProtKB-UniRule"/>
</dbReference>
<dbReference type="GO" id="GO:0070096">
    <property type="term" value="P:mitochondrial outer membrane translocase complex assembly"/>
    <property type="evidence" value="ECO:0007669"/>
    <property type="project" value="EnsemblFungi"/>
</dbReference>
<dbReference type="GO" id="GO:1990456">
    <property type="term" value="P:mitochondrion-endoplasmic reticulum membrane tethering"/>
    <property type="evidence" value="ECO:0007669"/>
    <property type="project" value="EnsemblFungi"/>
</dbReference>
<dbReference type="GO" id="GO:0045040">
    <property type="term" value="P:protein insertion into mitochondrial outer membrane"/>
    <property type="evidence" value="ECO:0007669"/>
    <property type="project" value="UniProtKB-UniRule"/>
</dbReference>
<dbReference type="CDD" id="cd21671">
    <property type="entry name" value="SMP_Mmm1"/>
    <property type="match status" value="1"/>
</dbReference>
<dbReference type="HAMAP" id="MF_03103">
    <property type="entry name" value="Mmm1"/>
    <property type="match status" value="1"/>
</dbReference>
<dbReference type="InterPro" id="IPR027537">
    <property type="entry name" value="Mmm1"/>
</dbReference>
<dbReference type="InterPro" id="IPR019411">
    <property type="entry name" value="MMM1_dom"/>
</dbReference>
<dbReference type="InterPro" id="IPR031468">
    <property type="entry name" value="SMP_LBD"/>
</dbReference>
<dbReference type="PANTHER" id="PTHR13466:SF0">
    <property type="entry name" value="SMP-LTD DOMAIN-CONTAINING PROTEIN"/>
    <property type="match status" value="1"/>
</dbReference>
<dbReference type="PANTHER" id="PTHR13466">
    <property type="entry name" value="TEX2 PROTEIN-RELATED"/>
    <property type="match status" value="1"/>
</dbReference>
<dbReference type="Pfam" id="PF10296">
    <property type="entry name" value="MMM1"/>
    <property type="match status" value="1"/>
</dbReference>
<dbReference type="PROSITE" id="PS51847">
    <property type="entry name" value="SMP"/>
    <property type="match status" value="1"/>
</dbReference>
<reference key="1">
    <citation type="journal article" date="2007" name="Proc. Natl. Acad. Sci. U.S.A.">
        <title>Independent sorting-out of thousands of duplicated gene pairs in two yeast species descended from a whole-genome duplication.</title>
        <authorList>
            <person name="Scannell D.R."/>
            <person name="Frank A.C."/>
            <person name="Conant G.C."/>
            <person name="Byrne K.P."/>
            <person name="Woolfit M."/>
            <person name="Wolfe K.H."/>
        </authorList>
    </citation>
    <scope>NUCLEOTIDE SEQUENCE [LARGE SCALE GENOMIC DNA]</scope>
    <source>
        <strain>ATCC 22028 / DSM 70294 / BCRC 21397 / CBS 2163 / NBRC 10782 / NRRL Y-8283 / UCD 57-17</strain>
    </source>
</reference>
<keyword id="KW-0256">Endoplasmic reticulum</keyword>
<keyword id="KW-0445">Lipid transport</keyword>
<keyword id="KW-0446">Lipid-binding</keyword>
<keyword id="KW-0472">Membrane</keyword>
<keyword id="KW-1185">Reference proteome</keyword>
<keyword id="KW-0812">Transmembrane</keyword>
<keyword id="KW-1133">Transmembrane helix</keyword>
<keyword id="KW-0813">Transport</keyword>
<name>MMM1_VANPO</name>
<evidence type="ECO:0000255" key="1">
    <source>
        <dbReference type="HAMAP-Rule" id="MF_03103"/>
    </source>
</evidence>
<gene>
    <name evidence="1" type="primary">MMM1</name>
    <name type="ORF">Kpol_2002p105</name>
</gene>
<accession>A7TFL9</accession>
<proteinExistence type="inferred from homology"/>
<organism>
    <name type="scientific">Vanderwaltozyma polyspora (strain ATCC 22028 / DSM 70294 / BCRC 21397 / CBS 2163 / NBRC 10782 / NRRL Y-8283 / UCD 57-17)</name>
    <name type="common">Kluyveromyces polysporus</name>
    <dbReference type="NCBI Taxonomy" id="436907"/>
    <lineage>
        <taxon>Eukaryota</taxon>
        <taxon>Fungi</taxon>
        <taxon>Dikarya</taxon>
        <taxon>Ascomycota</taxon>
        <taxon>Saccharomycotina</taxon>
        <taxon>Saccharomycetes</taxon>
        <taxon>Saccharomycetales</taxon>
        <taxon>Saccharomycetaceae</taxon>
        <taxon>Vanderwaltozyma</taxon>
    </lineage>
</organism>
<sequence length="444" mass="50726">MNNLDNLAGNMSNLTIQGKGNETLISLDEYVNNILPSHLKKIFSDNLRENYQIPREFFESAELSGINNKIDQEIQKYSHLLKGLSNNGQTSFGSYLSNSNSFSGWSFIEGFIIGQFSVIIVLIFFIKFFVFSDGSSSNSSNPKPSLNSRSDRTSFSYKSNSMLSSNFFSSIMKRGGKTHYETDIDSGNTNRLNTILEKVYYDVDTHPSESLDWFNVLIAQTIQQFREEAWQRDNIVHSLNDFLHSKSSEMPSYLDDIKITELDIGDDFPIFSNCKIQYSPNSNKKKLEAKIYIDLNDRLAFGIETKLLVNYPKPRTAVLPVNLTVAIVRFQACLTVSLTNAEDFVPTTKETASSQDDDGYFLMFSFGPEYKMDFDIESLIGARSKLQNIPKISSVIEYHIKKWFVERCVEPRFQCIRLPSMWPRSKNTREEKVDTDDVPLSKAE</sequence>
<comment type="function">
    <text evidence="1">Component of the ERMES/MDM complex, which serves as a molecular tether to connect the endoplasmic reticulum (ER) and mitochondria. Components of this complex are involved in the control of mitochondrial shape and protein biogenesis, and function in nonvesicular lipid trafficking between the ER and mitochondria. The MDM12-MMM1 subcomplex functions in the major beta-barrel assembly pathway that is responsible for biogenesis of all outer membrane beta-barrel proteins, and acts in a late step after the SAM complex. The MDM10-MDM12-MMM1 subcomplex further acts in the TOM40-specific pathway after the action of the MDM12-MMM1 complex. Essential for establishing and maintaining the structure of mitochondria and maintenance of mtDNA nucleoids.</text>
</comment>
<comment type="subunit">
    <text evidence="1">Homodimer. Component of the ER-mitochondria encounter structure (ERMES) or MDM complex, composed of MMM1, MDM10, MDM12 and MDM34. A MMM1 homodimer associates with one molecule of MDM12 on each side in a pairwise head-to-tail manner, and the SMP-LTD domains of MMM1 and MDM12 generate a continuous hydrophobic tunnel for phospholipid trafficking.</text>
</comment>
<comment type="subcellular location">
    <subcellularLocation>
        <location evidence="1">Endoplasmic reticulum membrane</location>
        <topology evidence="1">Single-pass type I membrane protein</topology>
    </subcellularLocation>
    <text evidence="1">The ERMES/MDM complex localizes to a few discrete foci (around 10 per single cell), that represent mitochondria-endoplasmic reticulum junctions. These foci are often found next to mtDNA nucleoids.</text>
</comment>
<comment type="domain">
    <text evidence="1">The SMP-LTD domain is a barrel-like domain that can bind various types of glycerophospholipids in its interior and mediate their transfer between two adjacent bilayers.</text>
</comment>
<comment type="similarity">
    <text evidence="1">Belongs to the MMM1 family.</text>
</comment>